<keyword id="KW-0687">Ribonucleoprotein</keyword>
<keyword id="KW-0689">Ribosomal protein</keyword>
<keyword id="KW-0694">RNA-binding</keyword>
<keyword id="KW-0699">rRNA-binding</keyword>
<organism>
    <name type="scientific">Burkholderia cenocepacia (strain HI2424)</name>
    <dbReference type="NCBI Taxonomy" id="331272"/>
    <lineage>
        <taxon>Bacteria</taxon>
        <taxon>Pseudomonadati</taxon>
        <taxon>Pseudomonadota</taxon>
        <taxon>Betaproteobacteria</taxon>
        <taxon>Burkholderiales</taxon>
        <taxon>Burkholderiaceae</taxon>
        <taxon>Burkholderia</taxon>
        <taxon>Burkholderia cepacia complex</taxon>
    </lineage>
</organism>
<reference key="1">
    <citation type="submission" date="2006-08" db="EMBL/GenBank/DDBJ databases">
        <title>Complete sequence of chromosome 1 of Burkholderia cenocepacia HI2424.</title>
        <authorList>
            <person name="Copeland A."/>
            <person name="Lucas S."/>
            <person name="Lapidus A."/>
            <person name="Barry K."/>
            <person name="Detter J.C."/>
            <person name="Glavina del Rio T."/>
            <person name="Hammon N."/>
            <person name="Israni S."/>
            <person name="Pitluck S."/>
            <person name="Chain P."/>
            <person name="Malfatti S."/>
            <person name="Shin M."/>
            <person name="Vergez L."/>
            <person name="Schmutz J."/>
            <person name="Larimer F."/>
            <person name="Land M."/>
            <person name="Hauser L."/>
            <person name="Kyrpides N."/>
            <person name="Kim E."/>
            <person name="LiPuma J.J."/>
            <person name="Gonzalez C.F."/>
            <person name="Konstantinidis K."/>
            <person name="Tiedje J.M."/>
            <person name="Richardson P."/>
        </authorList>
    </citation>
    <scope>NUCLEOTIDE SEQUENCE [LARGE SCALE GENOMIC DNA]</scope>
    <source>
        <strain>HI2424</strain>
    </source>
</reference>
<dbReference type="EMBL" id="CP000458">
    <property type="protein sequence ID" value="ABK07121.1"/>
    <property type="molecule type" value="Genomic_DNA"/>
</dbReference>
<dbReference type="RefSeq" id="WP_006477180.1">
    <property type="nucleotide sequence ID" value="NC_008542.1"/>
</dbReference>
<dbReference type="SMR" id="A0K3P4"/>
<dbReference type="GeneID" id="93193432"/>
<dbReference type="KEGG" id="bch:Bcen2424_0367"/>
<dbReference type="HOGENOM" id="CLU_055188_4_2_4"/>
<dbReference type="GO" id="GO:0022625">
    <property type="term" value="C:cytosolic large ribosomal subunit"/>
    <property type="evidence" value="ECO:0007669"/>
    <property type="project" value="TreeGrafter"/>
</dbReference>
<dbReference type="GO" id="GO:0019843">
    <property type="term" value="F:rRNA binding"/>
    <property type="evidence" value="ECO:0007669"/>
    <property type="project" value="UniProtKB-UniRule"/>
</dbReference>
<dbReference type="GO" id="GO:0003735">
    <property type="term" value="F:structural constituent of ribosome"/>
    <property type="evidence" value="ECO:0007669"/>
    <property type="project" value="InterPro"/>
</dbReference>
<dbReference type="GO" id="GO:0006412">
    <property type="term" value="P:translation"/>
    <property type="evidence" value="ECO:0007669"/>
    <property type="project" value="UniProtKB-UniRule"/>
</dbReference>
<dbReference type="Gene3D" id="3.100.10.10">
    <property type="match status" value="1"/>
</dbReference>
<dbReference type="HAMAP" id="MF_01341">
    <property type="entry name" value="Ribosomal_uL15"/>
    <property type="match status" value="1"/>
</dbReference>
<dbReference type="InterPro" id="IPR030878">
    <property type="entry name" value="Ribosomal_uL15"/>
</dbReference>
<dbReference type="InterPro" id="IPR021131">
    <property type="entry name" value="Ribosomal_uL15/eL18"/>
</dbReference>
<dbReference type="InterPro" id="IPR036227">
    <property type="entry name" value="Ribosomal_uL15/eL18_sf"/>
</dbReference>
<dbReference type="InterPro" id="IPR005749">
    <property type="entry name" value="Ribosomal_uL15_bac-type"/>
</dbReference>
<dbReference type="InterPro" id="IPR001196">
    <property type="entry name" value="Ribosomal_uL15_CS"/>
</dbReference>
<dbReference type="NCBIfam" id="TIGR01071">
    <property type="entry name" value="rplO_bact"/>
    <property type="match status" value="1"/>
</dbReference>
<dbReference type="PANTHER" id="PTHR12934">
    <property type="entry name" value="50S RIBOSOMAL PROTEIN L15"/>
    <property type="match status" value="1"/>
</dbReference>
<dbReference type="PANTHER" id="PTHR12934:SF11">
    <property type="entry name" value="LARGE RIBOSOMAL SUBUNIT PROTEIN UL15M"/>
    <property type="match status" value="1"/>
</dbReference>
<dbReference type="Pfam" id="PF00828">
    <property type="entry name" value="Ribosomal_L27A"/>
    <property type="match status" value="1"/>
</dbReference>
<dbReference type="SUPFAM" id="SSF52080">
    <property type="entry name" value="Ribosomal proteins L15p and L18e"/>
    <property type="match status" value="1"/>
</dbReference>
<dbReference type="PROSITE" id="PS00475">
    <property type="entry name" value="RIBOSOMAL_L15"/>
    <property type="match status" value="1"/>
</dbReference>
<protein>
    <recommendedName>
        <fullName evidence="1">Large ribosomal subunit protein uL15</fullName>
    </recommendedName>
    <alternativeName>
        <fullName evidence="3">50S ribosomal protein L15</fullName>
    </alternativeName>
</protein>
<evidence type="ECO:0000255" key="1">
    <source>
        <dbReference type="HAMAP-Rule" id="MF_01341"/>
    </source>
</evidence>
<evidence type="ECO:0000256" key="2">
    <source>
        <dbReference type="SAM" id="MobiDB-lite"/>
    </source>
</evidence>
<evidence type="ECO:0000305" key="3"/>
<sequence>MELNNLKPAAGAKHAKRRVGRGIGSGLGKTAGRGHKGQKSRSGGFHKVGFEGGQMPLQRRLPKRGFTSLTKEFVGEVRLSDLEKLPVDEIDLLALKQAGLVGELTKSAKIIATGELKRKIVVKGLGATKGARAAIEAAGGSFAE</sequence>
<name>RL15_BURCH</name>
<feature type="chain" id="PRO_1000054435" description="Large ribosomal subunit protein uL15">
    <location>
        <begin position="1"/>
        <end position="144"/>
    </location>
</feature>
<feature type="region of interest" description="Disordered" evidence="2">
    <location>
        <begin position="1"/>
        <end position="56"/>
    </location>
</feature>
<feature type="compositionally biased region" description="Gly residues" evidence="2">
    <location>
        <begin position="21"/>
        <end position="31"/>
    </location>
</feature>
<proteinExistence type="inferred from homology"/>
<gene>
    <name evidence="1" type="primary">rplO</name>
    <name type="ordered locus">Bcen2424_0367</name>
</gene>
<accession>A0K3P4</accession>
<comment type="function">
    <text evidence="1">Binds to the 23S rRNA.</text>
</comment>
<comment type="subunit">
    <text evidence="1">Part of the 50S ribosomal subunit.</text>
</comment>
<comment type="similarity">
    <text evidence="1">Belongs to the universal ribosomal protein uL15 family.</text>
</comment>